<feature type="chain" id="PRO_0000381421" description="Biotin synthase">
    <location>
        <begin position="1"/>
        <end position="326"/>
    </location>
</feature>
<feature type="domain" description="Radical SAM core" evidence="2">
    <location>
        <begin position="40"/>
        <end position="264"/>
    </location>
</feature>
<feature type="binding site" evidence="1">
    <location>
        <position position="55"/>
    </location>
    <ligand>
        <name>[4Fe-4S] cluster</name>
        <dbReference type="ChEBI" id="CHEBI:49883"/>
        <note>4Fe-4S-S-AdoMet</note>
    </ligand>
</feature>
<feature type="binding site" evidence="1">
    <location>
        <position position="59"/>
    </location>
    <ligand>
        <name>[4Fe-4S] cluster</name>
        <dbReference type="ChEBI" id="CHEBI:49883"/>
        <note>4Fe-4S-S-AdoMet</note>
    </ligand>
</feature>
<feature type="binding site" evidence="1">
    <location>
        <position position="62"/>
    </location>
    <ligand>
        <name>[4Fe-4S] cluster</name>
        <dbReference type="ChEBI" id="CHEBI:49883"/>
        <note>4Fe-4S-S-AdoMet</note>
    </ligand>
</feature>
<feature type="binding site" evidence="1">
    <location>
        <position position="99"/>
    </location>
    <ligand>
        <name>[2Fe-2S] cluster</name>
        <dbReference type="ChEBI" id="CHEBI:190135"/>
    </ligand>
</feature>
<feature type="binding site" evidence="1">
    <location>
        <position position="130"/>
    </location>
    <ligand>
        <name>[2Fe-2S] cluster</name>
        <dbReference type="ChEBI" id="CHEBI:190135"/>
    </ligand>
</feature>
<feature type="binding site" evidence="1">
    <location>
        <position position="190"/>
    </location>
    <ligand>
        <name>[2Fe-2S] cluster</name>
        <dbReference type="ChEBI" id="CHEBI:190135"/>
    </ligand>
</feature>
<feature type="binding site" evidence="1">
    <location>
        <position position="262"/>
    </location>
    <ligand>
        <name>[2Fe-2S] cluster</name>
        <dbReference type="ChEBI" id="CHEBI:190135"/>
    </ligand>
</feature>
<evidence type="ECO:0000255" key="1">
    <source>
        <dbReference type="HAMAP-Rule" id="MF_01694"/>
    </source>
</evidence>
<evidence type="ECO:0000255" key="2">
    <source>
        <dbReference type="PROSITE-ProRule" id="PRU01266"/>
    </source>
</evidence>
<protein>
    <recommendedName>
        <fullName evidence="1">Biotin synthase</fullName>
        <ecNumber evidence="1">2.8.1.6</ecNumber>
    </recommendedName>
</protein>
<proteinExistence type="inferred from homology"/>
<keyword id="KW-0001">2Fe-2S</keyword>
<keyword id="KW-0004">4Fe-4S</keyword>
<keyword id="KW-0093">Biotin biosynthesis</keyword>
<keyword id="KW-0408">Iron</keyword>
<keyword id="KW-0411">Iron-sulfur</keyword>
<keyword id="KW-0479">Metal-binding</keyword>
<keyword id="KW-1185">Reference proteome</keyword>
<keyword id="KW-0949">S-adenosyl-L-methionine</keyword>
<keyword id="KW-0808">Transferase</keyword>
<accession>A1WVM7</accession>
<gene>
    <name evidence="1" type="primary">bioB</name>
    <name type="ordered locus">Hhal_0963</name>
</gene>
<reference key="1">
    <citation type="submission" date="2006-12" db="EMBL/GenBank/DDBJ databases">
        <title>Complete sequence of Halorhodospira halophila SL1.</title>
        <authorList>
            <consortium name="US DOE Joint Genome Institute"/>
            <person name="Copeland A."/>
            <person name="Lucas S."/>
            <person name="Lapidus A."/>
            <person name="Barry K."/>
            <person name="Detter J.C."/>
            <person name="Glavina del Rio T."/>
            <person name="Hammon N."/>
            <person name="Israni S."/>
            <person name="Dalin E."/>
            <person name="Tice H."/>
            <person name="Pitluck S."/>
            <person name="Saunders E."/>
            <person name="Brettin T."/>
            <person name="Bruce D."/>
            <person name="Han C."/>
            <person name="Tapia R."/>
            <person name="Schmutz J."/>
            <person name="Larimer F."/>
            <person name="Land M."/>
            <person name="Hauser L."/>
            <person name="Kyrpides N."/>
            <person name="Mikhailova N."/>
            <person name="Hoff W."/>
            <person name="Richardson P."/>
        </authorList>
    </citation>
    <scope>NUCLEOTIDE SEQUENCE [LARGE SCALE GENOMIC DNA]</scope>
    <source>
        <strain>DSM 244 / SL1</strain>
    </source>
</reference>
<organism>
    <name type="scientific">Halorhodospira halophila (strain DSM 244 / SL1)</name>
    <name type="common">Ectothiorhodospira halophila (strain DSM 244 / SL1)</name>
    <dbReference type="NCBI Taxonomy" id="349124"/>
    <lineage>
        <taxon>Bacteria</taxon>
        <taxon>Pseudomonadati</taxon>
        <taxon>Pseudomonadota</taxon>
        <taxon>Gammaproteobacteria</taxon>
        <taxon>Chromatiales</taxon>
        <taxon>Ectothiorhodospiraceae</taxon>
        <taxon>Halorhodospira</taxon>
    </lineage>
</organism>
<sequence length="326" mass="35926">MTETDTWHWDQPQIHALFELPLPELLFRAQEVHRRHFNPGQVQACTLVSIKTGACAEDCTYCSQSARYDTGLEREALIDVETVREAAQRARASGATRLCMGAAWRGPKDRDLETLVAMVRAVKAEGLEACLSAGLLAEGQAERLAEAGLDYFNHNLDTSPSYYDQVVTTRSYEQRLQTLERIRDAGMRVCCGGIVGLGEARADRVEMLATLANLPVPPQSVPINRLIPIPGTPLEAAEPVDPFEIVRTIAATRLVLPRSYVRLAAGREQMSDELQALCLSAGANSLFLGERLLTTDNPDADADHRLLHRLGMTLEPRTHSCAELEP</sequence>
<dbReference type="EC" id="2.8.1.6" evidence="1"/>
<dbReference type="EMBL" id="CP000544">
    <property type="protein sequence ID" value="ABM61739.1"/>
    <property type="molecule type" value="Genomic_DNA"/>
</dbReference>
<dbReference type="RefSeq" id="WP_011813762.1">
    <property type="nucleotide sequence ID" value="NC_008789.1"/>
</dbReference>
<dbReference type="SMR" id="A1WVM7"/>
<dbReference type="STRING" id="349124.Hhal_0963"/>
<dbReference type="KEGG" id="hha:Hhal_0963"/>
<dbReference type="eggNOG" id="COG0502">
    <property type="taxonomic scope" value="Bacteria"/>
</dbReference>
<dbReference type="HOGENOM" id="CLU_033172_1_2_6"/>
<dbReference type="OrthoDB" id="9786826at2"/>
<dbReference type="UniPathway" id="UPA00078">
    <property type="reaction ID" value="UER00162"/>
</dbReference>
<dbReference type="Proteomes" id="UP000000647">
    <property type="component" value="Chromosome"/>
</dbReference>
<dbReference type="GO" id="GO:0051537">
    <property type="term" value="F:2 iron, 2 sulfur cluster binding"/>
    <property type="evidence" value="ECO:0007669"/>
    <property type="project" value="UniProtKB-KW"/>
</dbReference>
<dbReference type="GO" id="GO:0051539">
    <property type="term" value="F:4 iron, 4 sulfur cluster binding"/>
    <property type="evidence" value="ECO:0007669"/>
    <property type="project" value="UniProtKB-KW"/>
</dbReference>
<dbReference type="GO" id="GO:0004076">
    <property type="term" value="F:biotin synthase activity"/>
    <property type="evidence" value="ECO:0007669"/>
    <property type="project" value="UniProtKB-UniRule"/>
</dbReference>
<dbReference type="GO" id="GO:0005506">
    <property type="term" value="F:iron ion binding"/>
    <property type="evidence" value="ECO:0007669"/>
    <property type="project" value="UniProtKB-UniRule"/>
</dbReference>
<dbReference type="GO" id="GO:0009102">
    <property type="term" value="P:biotin biosynthetic process"/>
    <property type="evidence" value="ECO:0007669"/>
    <property type="project" value="UniProtKB-UniRule"/>
</dbReference>
<dbReference type="CDD" id="cd01335">
    <property type="entry name" value="Radical_SAM"/>
    <property type="match status" value="1"/>
</dbReference>
<dbReference type="Gene3D" id="3.20.20.70">
    <property type="entry name" value="Aldolase class I"/>
    <property type="match status" value="1"/>
</dbReference>
<dbReference type="HAMAP" id="MF_01694">
    <property type="entry name" value="BioB"/>
    <property type="match status" value="1"/>
</dbReference>
<dbReference type="InterPro" id="IPR013785">
    <property type="entry name" value="Aldolase_TIM"/>
</dbReference>
<dbReference type="InterPro" id="IPR010722">
    <property type="entry name" value="BATS_dom"/>
</dbReference>
<dbReference type="InterPro" id="IPR002684">
    <property type="entry name" value="Biotin_synth/BioAB"/>
</dbReference>
<dbReference type="InterPro" id="IPR024177">
    <property type="entry name" value="Biotin_synthase"/>
</dbReference>
<dbReference type="InterPro" id="IPR006638">
    <property type="entry name" value="Elp3/MiaA/NifB-like_rSAM"/>
</dbReference>
<dbReference type="InterPro" id="IPR007197">
    <property type="entry name" value="rSAM"/>
</dbReference>
<dbReference type="NCBIfam" id="TIGR00433">
    <property type="entry name" value="bioB"/>
    <property type="match status" value="1"/>
</dbReference>
<dbReference type="PANTHER" id="PTHR22976">
    <property type="entry name" value="BIOTIN SYNTHASE"/>
    <property type="match status" value="1"/>
</dbReference>
<dbReference type="PANTHER" id="PTHR22976:SF2">
    <property type="entry name" value="BIOTIN SYNTHASE, MITOCHONDRIAL"/>
    <property type="match status" value="1"/>
</dbReference>
<dbReference type="Pfam" id="PF06968">
    <property type="entry name" value="BATS"/>
    <property type="match status" value="1"/>
</dbReference>
<dbReference type="Pfam" id="PF04055">
    <property type="entry name" value="Radical_SAM"/>
    <property type="match status" value="1"/>
</dbReference>
<dbReference type="PIRSF" id="PIRSF001619">
    <property type="entry name" value="Biotin_synth"/>
    <property type="match status" value="1"/>
</dbReference>
<dbReference type="SFLD" id="SFLDF00272">
    <property type="entry name" value="biotin_synthase"/>
    <property type="match status" value="1"/>
</dbReference>
<dbReference type="SFLD" id="SFLDG01278">
    <property type="entry name" value="biotin_synthase_like"/>
    <property type="match status" value="1"/>
</dbReference>
<dbReference type="SMART" id="SM00876">
    <property type="entry name" value="BATS"/>
    <property type="match status" value="1"/>
</dbReference>
<dbReference type="SMART" id="SM00729">
    <property type="entry name" value="Elp3"/>
    <property type="match status" value="1"/>
</dbReference>
<dbReference type="SUPFAM" id="SSF102114">
    <property type="entry name" value="Radical SAM enzymes"/>
    <property type="match status" value="1"/>
</dbReference>
<dbReference type="PROSITE" id="PS51918">
    <property type="entry name" value="RADICAL_SAM"/>
    <property type="match status" value="1"/>
</dbReference>
<comment type="function">
    <text evidence="1">Catalyzes the conversion of dethiobiotin (DTB) to biotin by the insertion of a sulfur atom into dethiobiotin via a radical-based mechanism.</text>
</comment>
<comment type="catalytic activity">
    <reaction evidence="1">
        <text>(4R,5S)-dethiobiotin + (sulfur carrier)-SH + 2 reduced [2Fe-2S]-[ferredoxin] + 2 S-adenosyl-L-methionine = (sulfur carrier)-H + biotin + 2 5'-deoxyadenosine + 2 L-methionine + 2 oxidized [2Fe-2S]-[ferredoxin]</text>
        <dbReference type="Rhea" id="RHEA:22060"/>
        <dbReference type="Rhea" id="RHEA-COMP:10000"/>
        <dbReference type="Rhea" id="RHEA-COMP:10001"/>
        <dbReference type="Rhea" id="RHEA-COMP:14737"/>
        <dbReference type="Rhea" id="RHEA-COMP:14739"/>
        <dbReference type="ChEBI" id="CHEBI:17319"/>
        <dbReference type="ChEBI" id="CHEBI:29917"/>
        <dbReference type="ChEBI" id="CHEBI:33737"/>
        <dbReference type="ChEBI" id="CHEBI:33738"/>
        <dbReference type="ChEBI" id="CHEBI:57586"/>
        <dbReference type="ChEBI" id="CHEBI:57844"/>
        <dbReference type="ChEBI" id="CHEBI:59789"/>
        <dbReference type="ChEBI" id="CHEBI:64428"/>
        <dbReference type="ChEBI" id="CHEBI:149473"/>
        <dbReference type="EC" id="2.8.1.6"/>
    </reaction>
</comment>
<comment type="cofactor">
    <cofactor evidence="1">
        <name>[4Fe-4S] cluster</name>
        <dbReference type="ChEBI" id="CHEBI:49883"/>
    </cofactor>
    <text evidence="1">Binds 1 [4Fe-4S] cluster. The cluster is coordinated with 3 cysteines and an exchangeable S-adenosyl-L-methionine.</text>
</comment>
<comment type="cofactor">
    <cofactor evidence="1">
        <name>[2Fe-2S] cluster</name>
        <dbReference type="ChEBI" id="CHEBI:190135"/>
    </cofactor>
    <text evidence="1">Binds 1 [2Fe-2S] cluster. The cluster is coordinated with 3 cysteines and 1 arginine.</text>
</comment>
<comment type="pathway">
    <text evidence="1">Cofactor biosynthesis; biotin biosynthesis; biotin from 7,8-diaminononanoate: step 2/2.</text>
</comment>
<comment type="subunit">
    <text evidence="1">Homodimer.</text>
</comment>
<comment type="similarity">
    <text evidence="1">Belongs to the radical SAM superfamily. Biotin synthase family.</text>
</comment>
<name>BIOB_HALHL</name>